<gene>
    <name evidence="1" type="primary">purM</name>
    <name type="ordered locus">HS_1551</name>
</gene>
<keyword id="KW-0067">ATP-binding</keyword>
<keyword id="KW-0963">Cytoplasm</keyword>
<keyword id="KW-0436">Ligase</keyword>
<keyword id="KW-0547">Nucleotide-binding</keyword>
<keyword id="KW-0658">Purine biosynthesis</keyword>
<accession>Q0I5D1</accession>
<reference key="1">
    <citation type="journal article" date="2007" name="J. Bacteriol.">
        <title>Complete genome sequence of Haemophilus somnus (Histophilus somni) strain 129Pt and comparison to Haemophilus ducreyi 35000HP and Haemophilus influenzae Rd.</title>
        <authorList>
            <person name="Challacombe J.F."/>
            <person name="Duncan A.J."/>
            <person name="Brettin T.S."/>
            <person name="Bruce D."/>
            <person name="Chertkov O."/>
            <person name="Detter J.C."/>
            <person name="Han C.S."/>
            <person name="Misra M."/>
            <person name="Richardson P."/>
            <person name="Tapia R."/>
            <person name="Thayer N."/>
            <person name="Xie G."/>
            <person name="Inzana T.J."/>
        </authorList>
    </citation>
    <scope>NUCLEOTIDE SEQUENCE [LARGE SCALE GENOMIC DNA]</scope>
    <source>
        <strain>129Pt</strain>
    </source>
</reference>
<comment type="catalytic activity">
    <reaction evidence="1">
        <text>2-formamido-N(1)-(5-O-phospho-beta-D-ribosyl)acetamidine + ATP = 5-amino-1-(5-phospho-beta-D-ribosyl)imidazole + ADP + phosphate + H(+)</text>
        <dbReference type="Rhea" id="RHEA:23032"/>
        <dbReference type="ChEBI" id="CHEBI:15378"/>
        <dbReference type="ChEBI" id="CHEBI:30616"/>
        <dbReference type="ChEBI" id="CHEBI:43474"/>
        <dbReference type="ChEBI" id="CHEBI:137981"/>
        <dbReference type="ChEBI" id="CHEBI:147287"/>
        <dbReference type="ChEBI" id="CHEBI:456216"/>
        <dbReference type="EC" id="6.3.3.1"/>
    </reaction>
</comment>
<comment type="pathway">
    <text evidence="1">Purine metabolism; IMP biosynthesis via de novo pathway; 5-amino-1-(5-phospho-D-ribosyl)imidazole from N(2)-formyl-N(1)-(5-phospho-D-ribosyl)glycinamide: step 2/2.</text>
</comment>
<comment type="subcellular location">
    <subcellularLocation>
        <location evidence="1">Cytoplasm</location>
    </subcellularLocation>
</comment>
<comment type="similarity">
    <text evidence="1">Belongs to the AIR synthase family.</text>
</comment>
<sequence length="345" mass="37109">MSKQSLSYKDAGVDINAGNTLVERIKSDVKRTTRPEVIGGLGGFGALCALPSKYKDPILVSGTDGVGTKLRLAIDLKKHDTIGVDLVAMCVNDLVVQGAEPLFFLDYYATGKLDVDVAADVIKGIADGCVQAGCALVGGETAEMPGMYHTGDYDLAGFCVGVVEKSEIIDGSNVKAGDALLALASSGPHSNGYSLIRKVIEVSGIDPTTTQLAEHSFAEQVLAPTKIYVKPVLQLIKHTDVHAICHLTGGGFWENIPRVLPSSVKAVINEKSWEWHPIFKWLQEQGNIDRYEMYRTFNCGVGMIIALPQEDVETALALLQQVGEKAWVIGKIEHANADEEKVVIC</sequence>
<feature type="chain" id="PRO_1000046440" description="Phosphoribosylformylglycinamidine cyclo-ligase">
    <location>
        <begin position="1"/>
        <end position="345"/>
    </location>
</feature>
<evidence type="ECO:0000255" key="1">
    <source>
        <dbReference type="HAMAP-Rule" id="MF_00741"/>
    </source>
</evidence>
<dbReference type="EC" id="6.3.3.1" evidence="1"/>
<dbReference type="EMBL" id="CP000436">
    <property type="protein sequence ID" value="ABI25819.1"/>
    <property type="molecule type" value="Genomic_DNA"/>
</dbReference>
<dbReference type="SMR" id="Q0I5D1"/>
<dbReference type="KEGG" id="hso:HS_1551"/>
<dbReference type="eggNOG" id="COG0150">
    <property type="taxonomic scope" value="Bacteria"/>
</dbReference>
<dbReference type="HOGENOM" id="CLU_047116_0_0_6"/>
<dbReference type="UniPathway" id="UPA00074">
    <property type="reaction ID" value="UER00129"/>
</dbReference>
<dbReference type="GO" id="GO:0005829">
    <property type="term" value="C:cytosol"/>
    <property type="evidence" value="ECO:0007669"/>
    <property type="project" value="TreeGrafter"/>
</dbReference>
<dbReference type="GO" id="GO:0005524">
    <property type="term" value="F:ATP binding"/>
    <property type="evidence" value="ECO:0007669"/>
    <property type="project" value="UniProtKB-KW"/>
</dbReference>
<dbReference type="GO" id="GO:0004637">
    <property type="term" value="F:phosphoribosylamine-glycine ligase activity"/>
    <property type="evidence" value="ECO:0007669"/>
    <property type="project" value="TreeGrafter"/>
</dbReference>
<dbReference type="GO" id="GO:0004641">
    <property type="term" value="F:phosphoribosylformylglycinamidine cyclo-ligase activity"/>
    <property type="evidence" value="ECO:0007669"/>
    <property type="project" value="UniProtKB-UniRule"/>
</dbReference>
<dbReference type="GO" id="GO:0006189">
    <property type="term" value="P:'de novo' IMP biosynthetic process"/>
    <property type="evidence" value="ECO:0007669"/>
    <property type="project" value="UniProtKB-UniRule"/>
</dbReference>
<dbReference type="GO" id="GO:0046084">
    <property type="term" value="P:adenine biosynthetic process"/>
    <property type="evidence" value="ECO:0007669"/>
    <property type="project" value="TreeGrafter"/>
</dbReference>
<dbReference type="CDD" id="cd02196">
    <property type="entry name" value="PurM"/>
    <property type="match status" value="1"/>
</dbReference>
<dbReference type="FunFam" id="3.30.1330.10:FF:000001">
    <property type="entry name" value="Phosphoribosylformylglycinamidine cyclo-ligase"/>
    <property type="match status" value="1"/>
</dbReference>
<dbReference type="FunFam" id="3.90.650.10:FF:000001">
    <property type="entry name" value="Phosphoribosylformylglycinamidine cyclo-ligase"/>
    <property type="match status" value="1"/>
</dbReference>
<dbReference type="Gene3D" id="3.90.650.10">
    <property type="entry name" value="PurM-like C-terminal domain"/>
    <property type="match status" value="1"/>
</dbReference>
<dbReference type="Gene3D" id="3.30.1330.10">
    <property type="entry name" value="PurM-like, N-terminal domain"/>
    <property type="match status" value="1"/>
</dbReference>
<dbReference type="HAMAP" id="MF_00741">
    <property type="entry name" value="AIRS"/>
    <property type="match status" value="1"/>
</dbReference>
<dbReference type="InterPro" id="IPR010918">
    <property type="entry name" value="PurM-like_C_dom"/>
</dbReference>
<dbReference type="InterPro" id="IPR036676">
    <property type="entry name" value="PurM-like_C_sf"/>
</dbReference>
<dbReference type="InterPro" id="IPR016188">
    <property type="entry name" value="PurM-like_N"/>
</dbReference>
<dbReference type="InterPro" id="IPR036921">
    <property type="entry name" value="PurM-like_N_sf"/>
</dbReference>
<dbReference type="InterPro" id="IPR004733">
    <property type="entry name" value="PurM_cligase"/>
</dbReference>
<dbReference type="NCBIfam" id="TIGR00878">
    <property type="entry name" value="purM"/>
    <property type="match status" value="1"/>
</dbReference>
<dbReference type="PANTHER" id="PTHR10520:SF12">
    <property type="entry name" value="TRIFUNCTIONAL PURINE BIOSYNTHETIC PROTEIN ADENOSINE-3"/>
    <property type="match status" value="1"/>
</dbReference>
<dbReference type="PANTHER" id="PTHR10520">
    <property type="entry name" value="TRIFUNCTIONAL PURINE BIOSYNTHETIC PROTEIN ADENOSINE-3-RELATED"/>
    <property type="match status" value="1"/>
</dbReference>
<dbReference type="Pfam" id="PF00586">
    <property type="entry name" value="AIRS"/>
    <property type="match status" value="1"/>
</dbReference>
<dbReference type="Pfam" id="PF02769">
    <property type="entry name" value="AIRS_C"/>
    <property type="match status" value="1"/>
</dbReference>
<dbReference type="SUPFAM" id="SSF56042">
    <property type="entry name" value="PurM C-terminal domain-like"/>
    <property type="match status" value="1"/>
</dbReference>
<dbReference type="SUPFAM" id="SSF55326">
    <property type="entry name" value="PurM N-terminal domain-like"/>
    <property type="match status" value="1"/>
</dbReference>
<protein>
    <recommendedName>
        <fullName evidence="1">Phosphoribosylformylglycinamidine cyclo-ligase</fullName>
        <ecNumber evidence="1">6.3.3.1</ecNumber>
    </recommendedName>
    <alternativeName>
        <fullName evidence="1">AIR synthase</fullName>
    </alternativeName>
    <alternativeName>
        <fullName evidence="1">AIRS</fullName>
    </alternativeName>
    <alternativeName>
        <fullName evidence="1">Phosphoribosyl-aminoimidazole synthetase</fullName>
    </alternativeName>
</protein>
<organism>
    <name type="scientific">Histophilus somni (strain 129Pt)</name>
    <name type="common">Haemophilus somnus</name>
    <dbReference type="NCBI Taxonomy" id="205914"/>
    <lineage>
        <taxon>Bacteria</taxon>
        <taxon>Pseudomonadati</taxon>
        <taxon>Pseudomonadota</taxon>
        <taxon>Gammaproteobacteria</taxon>
        <taxon>Pasteurellales</taxon>
        <taxon>Pasteurellaceae</taxon>
        <taxon>Histophilus</taxon>
    </lineage>
</organism>
<name>PUR5_HISS1</name>
<proteinExistence type="inferred from homology"/>